<feature type="chain" id="PRO_0000303274" description="tRNA N6-adenosine threonylcarbamoyltransferase">
    <location>
        <begin position="1"/>
        <end position="339"/>
    </location>
</feature>
<feature type="binding site" evidence="1">
    <location>
        <position position="111"/>
    </location>
    <ligand>
        <name>Fe cation</name>
        <dbReference type="ChEBI" id="CHEBI:24875"/>
    </ligand>
</feature>
<feature type="binding site" evidence="1">
    <location>
        <position position="115"/>
    </location>
    <ligand>
        <name>Fe cation</name>
        <dbReference type="ChEBI" id="CHEBI:24875"/>
    </ligand>
</feature>
<feature type="binding site" evidence="1">
    <location>
        <begin position="139"/>
        <end position="143"/>
    </location>
    <ligand>
        <name>substrate</name>
    </ligand>
</feature>
<feature type="binding site" evidence="1">
    <location>
        <position position="172"/>
    </location>
    <ligand>
        <name>substrate</name>
    </ligand>
</feature>
<feature type="binding site" evidence="1">
    <location>
        <position position="185"/>
    </location>
    <ligand>
        <name>substrate</name>
    </ligand>
</feature>
<feature type="binding site" evidence="1">
    <location>
        <position position="189"/>
    </location>
    <ligand>
        <name>substrate</name>
    </ligand>
</feature>
<feature type="binding site" evidence="1">
    <location>
        <position position="280"/>
    </location>
    <ligand>
        <name>substrate</name>
    </ligand>
</feature>
<feature type="binding site" evidence="1">
    <location>
        <position position="308"/>
    </location>
    <ligand>
        <name>Fe cation</name>
        <dbReference type="ChEBI" id="CHEBI:24875"/>
    </ligand>
</feature>
<gene>
    <name evidence="1" type="primary">tsaD</name>
    <name type="synonym">gcp</name>
    <name type="ordered locus">BVU_3277</name>
</gene>
<name>TSAD_PHOV8</name>
<dbReference type="EC" id="2.3.1.234" evidence="1"/>
<dbReference type="EMBL" id="CP000139">
    <property type="protein sequence ID" value="ABR40906.1"/>
    <property type="molecule type" value="Genomic_DNA"/>
</dbReference>
<dbReference type="RefSeq" id="WP_005841268.1">
    <property type="nucleotide sequence ID" value="NZ_JANSWM010000071.1"/>
</dbReference>
<dbReference type="SMR" id="A6L5E2"/>
<dbReference type="STRING" id="435590.BVU_3277"/>
<dbReference type="PaxDb" id="435590-BVU_3277"/>
<dbReference type="GeneID" id="5304238"/>
<dbReference type="KEGG" id="bvu:BVU_3277"/>
<dbReference type="eggNOG" id="COG0533">
    <property type="taxonomic scope" value="Bacteria"/>
</dbReference>
<dbReference type="HOGENOM" id="CLU_023208_0_2_10"/>
<dbReference type="BioCyc" id="BVUL435590:G1G59-3399-MONOMER"/>
<dbReference type="Proteomes" id="UP000002861">
    <property type="component" value="Chromosome"/>
</dbReference>
<dbReference type="GO" id="GO:0005737">
    <property type="term" value="C:cytoplasm"/>
    <property type="evidence" value="ECO:0007669"/>
    <property type="project" value="UniProtKB-SubCell"/>
</dbReference>
<dbReference type="GO" id="GO:0005506">
    <property type="term" value="F:iron ion binding"/>
    <property type="evidence" value="ECO:0007669"/>
    <property type="project" value="UniProtKB-UniRule"/>
</dbReference>
<dbReference type="GO" id="GO:0061711">
    <property type="term" value="F:N(6)-L-threonylcarbamoyladenine synthase activity"/>
    <property type="evidence" value="ECO:0007669"/>
    <property type="project" value="UniProtKB-EC"/>
</dbReference>
<dbReference type="GO" id="GO:0002949">
    <property type="term" value="P:tRNA threonylcarbamoyladenosine modification"/>
    <property type="evidence" value="ECO:0007669"/>
    <property type="project" value="UniProtKB-UniRule"/>
</dbReference>
<dbReference type="CDD" id="cd24133">
    <property type="entry name" value="ASKHA_NBD_TsaD_bac"/>
    <property type="match status" value="1"/>
</dbReference>
<dbReference type="FunFam" id="3.30.420.40:FF:000012">
    <property type="entry name" value="tRNA N6-adenosine threonylcarbamoyltransferase"/>
    <property type="match status" value="1"/>
</dbReference>
<dbReference type="FunFam" id="3.30.420.40:FF:000040">
    <property type="entry name" value="tRNA N6-adenosine threonylcarbamoyltransferase"/>
    <property type="match status" value="1"/>
</dbReference>
<dbReference type="Gene3D" id="3.30.420.40">
    <property type="match status" value="2"/>
</dbReference>
<dbReference type="HAMAP" id="MF_01445">
    <property type="entry name" value="TsaD"/>
    <property type="match status" value="1"/>
</dbReference>
<dbReference type="InterPro" id="IPR043129">
    <property type="entry name" value="ATPase_NBD"/>
</dbReference>
<dbReference type="InterPro" id="IPR000905">
    <property type="entry name" value="Gcp-like_dom"/>
</dbReference>
<dbReference type="InterPro" id="IPR017861">
    <property type="entry name" value="KAE1/TsaD"/>
</dbReference>
<dbReference type="InterPro" id="IPR017860">
    <property type="entry name" value="Peptidase_M22_CS"/>
</dbReference>
<dbReference type="InterPro" id="IPR022450">
    <property type="entry name" value="TsaD"/>
</dbReference>
<dbReference type="NCBIfam" id="TIGR00329">
    <property type="entry name" value="gcp_kae1"/>
    <property type="match status" value="1"/>
</dbReference>
<dbReference type="NCBIfam" id="TIGR03723">
    <property type="entry name" value="T6A_TsaD_YgjD"/>
    <property type="match status" value="1"/>
</dbReference>
<dbReference type="PANTHER" id="PTHR11735">
    <property type="entry name" value="TRNA N6-ADENOSINE THREONYLCARBAMOYLTRANSFERASE"/>
    <property type="match status" value="1"/>
</dbReference>
<dbReference type="PANTHER" id="PTHR11735:SF6">
    <property type="entry name" value="TRNA N6-ADENOSINE THREONYLCARBAMOYLTRANSFERASE, MITOCHONDRIAL"/>
    <property type="match status" value="1"/>
</dbReference>
<dbReference type="Pfam" id="PF00814">
    <property type="entry name" value="TsaD"/>
    <property type="match status" value="1"/>
</dbReference>
<dbReference type="PRINTS" id="PR00789">
    <property type="entry name" value="OSIALOPTASE"/>
</dbReference>
<dbReference type="SUPFAM" id="SSF53067">
    <property type="entry name" value="Actin-like ATPase domain"/>
    <property type="match status" value="2"/>
</dbReference>
<dbReference type="PROSITE" id="PS01016">
    <property type="entry name" value="GLYCOPROTEASE"/>
    <property type="match status" value="1"/>
</dbReference>
<comment type="function">
    <text evidence="1">Required for the formation of a threonylcarbamoyl group on adenosine at position 37 (t(6)A37) in tRNAs that read codons beginning with adenine. Is involved in the transfer of the threonylcarbamoyl moiety of threonylcarbamoyl-AMP (TC-AMP) to the N6 group of A37, together with TsaE and TsaB. TsaD likely plays a direct catalytic role in this reaction.</text>
</comment>
<comment type="catalytic activity">
    <reaction evidence="1">
        <text>L-threonylcarbamoyladenylate + adenosine(37) in tRNA = N(6)-L-threonylcarbamoyladenosine(37) in tRNA + AMP + H(+)</text>
        <dbReference type="Rhea" id="RHEA:37059"/>
        <dbReference type="Rhea" id="RHEA-COMP:10162"/>
        <dbReference type="Rhea" id="RHEA-COMP:10163"/>
        <dbReference type="ChEBI" id="CHEBI:15378"/>
        <dbReference type="ChEBI" id="CHEBI:73682"/>
        <dbReference type="ChEBI" id="CHEBI:74411"/>
        <dbReference type="ChEBI" id="CHEBI:74418"/>
        <dbReference type="ChEBI" id="CHEBI:456215"/>
        <dbReference type="EC" id="2.3.1.234"/>
    </reaction>
</comment>
<comment type="cofactor">
    <cofactor evidence="1">
        <name>Fe(2+)</name>
        <dbReference type="ChEBI" id="CHEBI:29033"/>
    </cofactor>
    <text evidence="1">Binds 1 Fe(2+) ion per subunit.</text>
</comment>
<comment type="subcellular location">
    <subcellularLocation>
        <location evidence="1">Cytoplasm</location>
    </subcellularLocation>
</comment>
<comment type="similarity">
    <text evidence="1">Belongs to the KAE1 / TsaD family.</text>
</comment>
<sequence>MDTIILGIESSCDDTSAAVIKNGVLLSNVVSSQAVHEAYGGVVPELASRAHQQNIVPVVHEALKRAGVTKEQLSAVAFTRGPGLMGSLLVGVSFAKGFARSLNIPMIDVNHLQAHVLAHFIKESEEDNNQPKFPFLCLLVSGGNSQIILVKAYNDMEVLGQTIDDAAGEAIDKCSKVMGLGYPGGPIIDKLARQGNPKAFTFSKPHIPDYNYSFSGLKTSFLYSLRDWLKEDPDFIEHHKNDLAASLEATIVDILMDKLRKAAKNLKINEVAVAGGVSANNGLRNSFREHAGKYGWNIYIPKFSFTTDNAAMIAITGYYKYLDNDFCTIDKPAYSRVTI</sequence>
<evidence type="ECO:0000255" key="1">
    <source>
        <dbReference type="HAMAP-Rule" id="MF_01445"/>
    </source>
</evidence>
<protein>
    <recommendedName>
        <fullName evidence="1">tRNA N6-adenosine threonylcarbamoyltransferase</fullName>
        <ecNumber evidence="1">2.3.1.234</ecNumber>
    </recommendedName>
    <alternativeName>
        <fullName evidence="1">N6-L-threonylcarbamoyladenine synthase</fullName>
        <shortName evidence="1">t(6)A synthase</shortName>
    </alternativeName>
    <alternativeName>
        <fullName evidence="1">t(6)A37 threonylcarbamoyladenosine biosynthesis protein TsaD</fullName>
    </alternativeName>
    <alternativeName>
        <fullName evidence="1">tRNA threonylcarbamoyladenosine biosynthesis protein TsaD</fullName>
    </alternativeName>
</protein>
<proteinExistence type="inferred from homology"/>
<reference key="1">
    <citation type="journal article" date="2007" name="PLoS Biol.">
        <title>Evolution of symbiotic bacteria in the distal human intestine.</title>
        <authorList>
            <person name="Xu J."/>
            <person name="Mahowald M.A."/>
            <person name="Ley R.E."/>
            <person name="Lozupone C.A."/>
            <person name="Hamady M."/>
            <person name="Martens E.C."/>
            <person name="Henrissat B."/>
            <person name="Coutinho P.M."/>
            <person name="Minx P."/>
            <person name="Latreille P."/>
            <person name="Cordum H."/>
            <person name="Van Brunt A."/>
            <person name="Kim K."/>
            <person name="Fulton R.S."/>
            <person name="Fulton L.A."/>
            <person name="Clifton S.W."/>
            <person name="Wilson R.K."/>
            <person name="Knight R.D."/>
            <person name="Gordon J.I."/>
        </authorList>
    </citation>
    <scope>NUCLEOTIDE SEQUENCE [LARGE SCALE GENOMIC DNA]</scope>
    <source>
        <strain>ATCC 8482 / DSM 1447 / JCM 5826 / CCUG 4940 / NBRC 14291 / NCTC 11154</strain>
    </source>
</reference>
<keyword id="KW-0012">Acyltransferase</keyword>
<keyword id="KW-0963">Cytoplasm</keyword>
<keyword id="KW-0408">Iron</keyword>
<keyword id="KW-0479">Metal-binding</keyword>
<keyword id="KW-0808">Transferase</keyword>
<keyword id="KW-0819">tRNA processing</keyword>
<accession>A6L5E2</accession>
<organism>
    <name type="scientific">Phocaeicola vulgatus (strain ATCC 8482 / DSM 1447 / JCM 5826 / CCUG 4940 / NBRC 14291 / NCTC 11154)</name>
    <name type="common">Bacteroides vulgatus</name>
    <dbReference type="NCBI Taxonomy" id="435590"/>
    <lineage>
        <taxon>Bacteria</taxon>
        <taxon>Pseudomonadati</taxon>
        <taxon>Bacteroidota</taxon>
        <taxon>Bacteroidia</taxon>
        <taxon>Bacteroidales</taxon>
        <taxon>Bacteroidaceae</taxon>
        <taxon>Phocaeicola</taxon>
    </lineage>
</organism>